<protein>
    <recommendedName>
        <fullName evidence="1">UPF0102 protein YraN</fullName>
    </recommendedName>
</protein>
<name>YRAN_SALNS</name>
<dbReference type="EMBL" id="CP001113">
    <property type="protein sequence ID" value="ACF65459.1"/>
    <property type="molecule type" value="Genomic_DNA"/>
</dbReference>
<dbReference type="RefSeq" id="WP_000057285.1">
    <property type="nucleotide sequence ID" value="NZ_CCMR01000001.1"/>
</dbReference>
<dbReference type="SMR" id="B4T6Y0"/>
<dbReference type="KEGG" id="see:SNSL254_A3523"/>
<dbReference type="HOGENOM" id="CLU_115353_1_0_6"/>
<dbReference type="Proteomes" id="UP000008824">
    <property type="component" value="Chromosome"/>
</dbReference>
<dbReference type="GO" id="GO:0003676">
    <property type="term" value="F:nucleic acid binding"/>
    <property type="evidence" value="ECO:0007669"/>
    <property type="project" value="InterPro"/>
</dbReference>
<dbReference type="CDD" id="cd20736">
    <property type="entry name" value="PoNe_Nuclease"/>
    <property type="match status" value="1"/>
</dbReference>
<dbReference type="Gene3D" id="3.40.1350.10">
    <property type="match status" value="1"/>
</dbReference>
<dbReference type="HAMAP" id="MF_00048">
    <property type="entry name" value="UPF0102"/>
    <property type="match status" value="1"/>
</dbReference>
<dbReference type="InterPro" id="IPR011335">
    <property type="entry name" value="Restrct_endonuc-II-like"/>
</dbReference>
<dbReference type="InterPro" id="IPR011856">
    <property type="entry name" value="tRNA_endonuc-like_dom_sf"/>
</dbReference>
<dbReference type="InterPro" id="IPR003509">
    <property type="entry name" value="UPF0102_YraN-like"/>
</dbReference>
<dbReference type="NCBIfam" id="NF009150">
    <property type="entry name" value="PRK12497.1-3"/>
    <property type="match status" value="1"/>
</dbReference>
<dbReference type="NCBIfam" id="TIGR00252">
    <property type="entry name" value="YraN family protein"/>
    <property type="match status" value="1"/>
</dbReference>
<dbReference type="PANTHER" id="PTHR34039">
    <property type="entry name" value="UPF0102 PROTEIN YRAN"/>
    <property type="match status" value="1"/>
</dbReference>
<dbReference type="PANTHER" id="PTHR34039:SF1">
    <property type="entry name" value="UPF0102 PROTEIN YRAN"/>
    <property type="match status" value="1"/>
</dbReference>
<dbReference type="Pfam" id="PF02021">
    <property type="entry name" value="UPF0102"/>
    <property type="match status" value="1"/>
</dbReference>
<dbReference type="SUPFAM" id="SSF52980">
    <property type="entry name" value="Restriction endonuclease-like"/>
    <property type="match status" value="1"/>
</dbReference>
<accession>B4T6Y0</accession>
<proteinExistence type="inferred from homology"/>
<organism>
    <name type="scientific">Salmonella newport (strain SL254)</name>
    <dbReference type="NCBI Taxonomy" id="423368"/>
    <lineage>
        <taxon>Bacteria</taxon>
        <taxon>Pseudomonadati</taxon>
        <taxon>Pseudomonadota</taxon>
        <taxon>Gammaproteobacteria</taxon>
        <taxon>Enterobacterales</taxon>
        <taxon>Enterobacteriaceae</taxon>
        <taxon>Salmonella</taxon>
    </lineage>
</organism>
<comment type="similarity">
    <text evidence="1">Belongs to the UPF0102 family.</text>
</comment>
<reference key="1">
    <citation type="journal article" date="2011" name="J. Bacteriol.">
        <title>Comparative genomics of 28 Salmonella enterica isolates: evidence for CRISPR-mediated adaptive sublineage evolution.</title>
        <authorList>
            <person name="Fricke W.F."/>
            <person name="Mammel M.K."/>
            <person name="McDermott P.F."/>
            <person name="Tartera C."/>
            <person name="White D.G."/>
            <person name="Leclerc J.E."/>
            <person name="Ravel J."/>
            <person name="Cebula T.A."/>
        </authorList>
    </citation>
    <scope>NUCLEOTIDE SEQUENCE [LARGE SCALE GENOMIC DNA]</scope>
    <source>
        <strain>SL254</strain>
    </source>
</reference>
<sequence length="131" mass="14903">MAQIPARGDCSRQLTRKQAGDAWEAAARRWLESKGLRFIAANVRERGGEIDLIMRDGKTTVFVEVRYRRSGLYGGAAASVTRSKQHKLLHTARLWLARQNGSFDTVDCRFDVLAFTGNEIEWFRDAFNDHS</sequence>
<feature type="chain" id="PRO_1000091262" description="UPF0102 protein YraN">
    <location>
        <begin position="1"/>
        <end position="131"/>
    </location>
</feature>
<evidence type="ECO:0000255" key="1">
    <source>
        <dbReference type="HAMAP-Rule" id="MF_00048"/>
    </source>
</evidence>
<gene>
    <name evidence="1" type="primary">yraN</name>
    <name type="ordered locus">SNSL254_A3523</name>
</gene>